<evidence type="ECO:0000255" key="1">
    <source>
        <dbReference type="HAMAP-Rule" id="MF_01191"/>
    </source>
</evidence>
<feature type="chain" id="PRO_0000293683" description="Probable succinate transporter subunit YjjB">
    <location>
        <begin position="1"/>
        <end position="153"/>
    </location>
</feature>
<feature type="transmembrane region" description="Helical" evidence="1">
    <location>
        <begin position="7"/>
        <end position="27"/>
    </location>
</feature>
<feature type="transmembrane region" description="Helical" evidence="1">
    <location>
        <begin position="51"/>
        <end position="71"/>
    </location>
</feature>
<feature type="transmembrane region" description="Helical" evidence="1">
    <location>
        <begin position="83"/>
        <end position="103"/>
    </location>
</feature>
<feature type="transmembrane region" description="Helical" evidence="1">
    <location>
        <begin position="125"/>
        <end position="145"/>
    </location>
</feature>
<protein>
    <recommendedName>
        <fullName evidence="1">Probable succinate transporter subunit YjjB</fullName>
    </recommendedName>
</protein>
<comment type="function">
    <text evidence="1">Involved in succinate export with YjjP. Both proteins are required for export.</text>
</comment>
<comment type="subunit">
    <text evidence="1">The transporter is composed of YjjB and YjjP.</text>
</comment>
<comment type="subcellular location">
    <subcellularLocation>
        <location evidence="1">Cell inner membrane</location>
        <topology evidence="1">Multi-pass membrane protein</topology>
    </subcellularLocation>
</comment>
<comment type="similarity">
    <text evidence="1">Belongs to the ThrE exporter (TC 2.A.79) family.</text>
</comment>
<accession>Q1C0I3</accession>
<name>YJJB_YERPA</name>
<keyword id="KW-0997">Cell inner membrane</keyword>
<keyword id="KW-1003">Cell membrane</keyword>
<keyword id="KW-0472">Membrane</keyword>
<keyword id="KW-0812">Transmembrane</keyword>
<keyword id="KW-1133">Transmembrane helix</keyword>
<keyword id="KW-0813">Transport</keyword>
<sequence>MGVSLLWALLQDMVLAAIPALGFAMVFNVPVRALRYCALLGAIGHGSRMLMIHFGMNIELASLVASIMIGINWSRWLLAHPKVFTVAAVIPMFPGISAYTAMISVVEISHLGYSEALMSTMVTNFLKASFIVGALSIGLSLPGLWLYRKRPGV</sequence>
<reference key="1">
    <citation type="journal article" date="2006" name="J. Bacteriol.">
        <title>Complete genome sequence of Yersinia pestis strains Antiqua and Nepal516: evidence of gene reduction in an emerging pathogen.</title>
        <authorList>
            <person name="Chain P.S.G."/>
            <person name="Hu P."/>
            <person name="Malfatti S.A."/>
            <person name="Radnedge L."/>
            <person name="Larimer F."/>
            <person name="Vergez L.M."/>
            <person name="Worsham P."/>
            <person name="Chu M.C."/>
            <person name="Andersen G.L."/>
        </authorList>
    </citation>
    <scope>NUCLEOTIDE SEQUENCE [LARGE SCALE GENOMIC DNA]</scope>
    <source>
        <strain>Antiqua</strain>
    </source>
</reference>
<gene>
    <name evidence="1" type="primary">yjjB</name>
    <name type="ordered locus">YPA_4078</name>
</gene>
<dbReference type="EMBL" id="CP000308">
    <property type="protein sequence ID" value="ABG16039.1"/>
    <property type="molecule type" value="Genomic_DNA"/>
</dbReference>
<dbReference type="KEGG" id="ypa:YPA_4078"/>
<dbReference type="Proteomes" id="UP000001971">
    <property type="component" value="Chromosome"/>
</dbReference>
<dbReference type="GO" id="GO:0005886">
    <property type="term" value="C:plasma membrane"/>
    <property type="evidence" value="ECO:0007669"/>
    <property type="project" value="UniProtKB-SubCell"/>
</dbReference>
<dbReference type="GO" id="GO:0015744">
    <property type="term" value="P:succinate transport"/>
    <property type="evidence" value="ECO:0007669"/>
    <property type="project" value="UniProtKB-UniRule"/>
</dbReference>
<dbReference type="HAMAP" id="MF_01191">
    <property type="entry name" value="YjjB"/>
    <property type="match status" value="1"/>
</dbReference>
<dbReference type="InterPro" id="IPR024528">
    <property type="entry name" value="ThrE_2"/>
</dbReference>
<dbReference type="InterPro" id="IPR050539">
    <property type="entry name" value="ThrE_Dicarb/AminoAcid_Exp"/>
</dbReference>
<dbReference type="InterPro" id="IPR020914">
    <property type="entry name" value="YjjB"/>
</dbReference>
<dbReference type="NCBIfam" id="NF007391">
    <property type="entry name" value="PRK09917.1"/>
    <property type="match status" value="1"/>
</dbReference>
<dbReference type="PANTHER" id="PTHR34390:SF1">
    <property type="entry name" value="SUCCINATE TRANSPORTER SUBUNIT YJJB-RELATED"/>
    <property type="match status" value="1"/>
</dbReference>
<dbReference type="PANTHER" id="PTHR34390">
    <property type="entry name" value="UPF0442 PROTEIN YJJB-RELATED"/>
    <property type="match status" value="1"/>
</dbReference>
<dbReference type="Pfam" id="PF12821">
    <property type="entry name" value="ThrE_2"/>
    <property type="match status" value="1"/>
</dbReference>
<proteinExistence type="inferred from homology"/>
<organism>
    <name type="scientific">Yersinia pestis bv. Antiqua (strain Antiqua)</name>
    <dbReference type="NCBI Taxonomy" id="360102"/>
    <lineage>
        <taxon>Bacteria</taxon>
        <taxon>Pseudomonadati</taxon>
        <taxon>Pseudomonadota</taxon>
        <taxon>Gammaproteobacteria</taxon>
        <taxon>Enterobacterales</taxon>
        <taxon>Yersiniaceae</taxon>
        <taxon>Yersinia</taxon>
    </lineage>
</organism>